<evidence type="ECO:0000250" key="1"/>
<evidence type="ECO:0000250" key="2">
    <source>
        <dbReference type="UniProtKB" id="P00157"/>
    </source>
</evidence>
<evidence type="ECO:0000255" key="3">
    <source>
        <dbReference type="PROSITE-ProRule" id="PRU00967"/>
    </source>
</evidence>
<evidence type="ECO:0000255" key="4">
    <source>
        <dbReference type="PROSITE-ProRule" id="PRU00968"/>
    </source>
</evidence>
<accession>Q508K6</accession>
<reference key="1">
    <citation type="journal article" date="2005" name="J. Mammal.">
        <title>Phylogenetics of the new world rodent family Heteromyidae.</title>
        <authorList>
            <person name="Alexander L.F."/>
            <person name="Riddle B.R."/>
        </authorList>
    </citation>
    <scope>NUCLEOTIDE SEQUENCE [GENOMIC DNA]</scope>
    <source>
        <strain>Isolate LVT 2114</strain>
    </source>
</reference>
<proteinExistence type="inferred from homology"/>
<comment type="function">
    <text evidence="2">Component of the ubiquinol-cytochrome c reductase complex (complex III or cytochrome b-c1 complex) that is part of the mitochondrial respiratory chain. The b-c1 complex mediates electron transfer from ubiquinol to cytochrome c. Contributes to the generation of a proton gradient across the mitochondrial membrane that is then used for ATP synthesis.</text>
</comment>
<comment type="cofactor">
    <cofactor evidence="2">
        <name>heme b</name>
        <dbReference type="ChEBI" id="CHEBI:60344"/>
    </cofactor>
    <text evidence="2">Binds 2 heme b groups non-covalently.</text>
</comment>
<comment type="subunit">
    <text evidence="2">The cytochrome bc1 complex contains 11 subunits: 3 respiratory subunits (MT-CYB, CYC1 and UQCRFS1), 2 core proteins (UQCRC1 and UQCRC2) and 6 low-molecular weight proteins (UQCRH/QCR6, UQCRB/QCR7, UQCRQ/QCR8, UQCR10/QCR9, UQCR11/QCR10 and a cleavage product of UQCRFS1). This cytochrome bc1 complex then forms a dimer.</text>
</comment>
<comment type="subcellular location">
    <subcellularLocation>
        <location evidence="2">Mitochondrion inner membrane</location>
        <topology evidence="2">Multi-pass membrane protein</topology>
    </subcellularLocation>
</comment>
<comment type="miscellaneous">
    <text evidence="1">Heme 1 (or BL or b562) is low-potential and absorbs at about 562 nm, and heme 2 (or BH or b566) is high-potential and absorbs at about 566 nm.</text>
</comment>
<comment type="similarity">
    <text evidence="3 4">Belongs to the cytochrome b family.</text>
</comment>
<comment type="caution">
    <text evidence="2">The full-length protein contains only eight transmembrane helices, not nine as predicted by bioinformatics tools.</text>
</comment>
<sequence length="379" mass="42830">MTITRKSHPLMKMVNHAFIDLPAPSNISSWWNFGSLLGLCLMIQIASGLFLAMHYTSDTLTAFSSVAHICRDVNYGWLIRYIHANGASLFFVCLYLHIGRGIYYGSYMYKETWNIGIILLFLTMATGFMGYVLPWGQMSFWGATVITNLLSAIPYVGTNLVEWIWGGFSVDKATLTRFFAFHFILPFIIAAMAMVHLLFLHETGSNNPLGIPSDSDKIPFHPYYTTKDLLGVFILLALFLTFVLFFPDLLGDPDNYSPANPLNTPPHIKPEWYFLFAYAILRSIPNKLGGVIALVLSILVLALFPLLHTANQRSMMFRPISQILFWTLVSDLMILTWIGGQPVEPPFIIIGQIASILYFSIILVLMPMAGFIENKLMKW</sequence>
<feature type="chain" id="PRO_0000255002" description="Cytochrome b">
    <location>
        <begin position="1"/>
        <end position="379"/>
    </location>
</feature>
<feature type="transmembrane region" description="Helical" evidence="2">
    <location>
        <begin position="33"/>
        <end position="53"/>
    </location>
</feature>
<feature type="transmembrane region" description="Helical" evidence="2">
    <location>
        <begin position="77"/>
        <end position="98"/>
    </location>
</feature>
<feature type="transmembrane region" description="Helical" evidence="2">
    <location>
        <begin position="113"/>
        <end position="133"/>
    </location>
</feature>
<feature type="transmembrane region" description="Helical" evidence="2">
    <location>
        <begin position="178"/>
        <end position="198"/>
    </location>
</feature>
<feature type="transmembrane region" description="Helical" evidence="2">
    <location>
        <begin position="226"/>
        <end position="246"/>
    </location>
</feature>
<feature type="transmembrane region" description="Helical" evidence="2">
    <location>
        <begin position="288"/>
        <end position="308"/>
    </location>
</feature>
<feature type="transmembrane region" description="Helical" evidence="2">
    <location>
        <begin position="320"/>
        <end position="340"/>
    </location>
</feature>
<feature type="transmembrane region" description="Helical" evidence="2">
    <location>
        <begin position="347"/>
        <end position="367"/>
    </location>
</feature>
<feature type="binding site" description="axial binding residue" evidence="2">
    <location>
        <position position="83"/>
    </location>
    <ligand>
        <name>heme b</name>
        <dbReference type="ChEBI" id="CHEBI:60344"/>
        <label>b562</label>
    </ligand>
    <ligandPart>
        <name>Fe</name>
        <dbReference type="ChEBI" id="CHEBI:18248"/>
    </ligandPart>
</feature>
<feature type="binding site" description="axial binding residue" evidence="2">
    <location>
        <position position="97"/>
    </location>
    <ligand>
        <name>heme b</name>
        <dbReference type="ChEBI" id="CHEBI:60344"/>
        <label>b566</label>
    </ligand>
    <ligandPart>
        <name>Fe</name>
        <dbReference type="ChEBI" id="CHEBI:18248"/>
    </ligandPart>
</feature>
<feature type="binding site" description="axial binding residue" evidence="2">
    <location>
        <position position="182"/>
    </location>
    <ligand>
        <name>heme b</name>
        <dbReference type="ChEBI" id="CHEBI:60344"/>
        <label>b562</label>
    </ligand>
    <ligandPart>
        <name>Fe</name>
        <dbReference type="ChEBI" id="CHEBI:18248"/>
    </ligandPart>
</feature>
<feature type="binding site" description="axial binding residue" evidence="2">
    <location>
        <position position="196"/>
    </location>
    <ligand>
        <name>heme b</name>
        <dbReference type="ChEBI" id="CHEBI:60344"/>
        <label>b566</label>
    </ligand>
    <ligandPart>
        <name>Fe</name>
        <dbReference type="ChEBI" id="CHEBI:18248"/>
    </ligandPart>
</feature>
<feature type="binding site" evidence="2">
    <location>
        <position position="201"/>
    </location>
    <ligand>
        <name>a ubiquinone</name>
        <dbReference type="ChEBI" id="CHEBI:16389"/>
    </ligand>
</feature>
<keyword id="KW-0249">Electron transport</keyword>
<keyword id="KW-0349">Heme</keyword>
<keyword id="KW-0408">Iron</keyword>
<keyword id="KW-0472">Membrane</keyword>
<keyword id="KW-0479">Metal-binding</keyword>
<keyword id="KW-0496">Mitochondrion</keyword>
<keyword id="KW-0999">Mitochondrion inner membrane</keyword>
<keyword id="KW-0679">Respiratory chain</keyword>
<keyword id="KW-0812">Transmembrane</keyword>
<keyword id="KW-1133">Transmembrane helix</keyword>
<keyword id="KW-0813">Transport</keyword>
<keyword id="KW-0830">Ubiquinone</keyword>
<name>CYB_CHARD</name>
<organism>
    <name type="scientific">Chaetodipus rudinoris</name>
    <name type="common">Baja pocket mouse</name>
    <dbReference type="NCBI Taxonomy" id="323381"/>
    <lineage>
        <taxon>Eukaryota</taxon>
        <taxon>Metazoa</taxon>
        <taxon>Chordata</taxon>
        <taxon>Craniata</taxon>
        <taxon>Vertebrata</taxon>
        <taxon>Euteleostomi</taxon>
        <taxon>Mammalia</taxon>
        <taxon>Eutheria</taxon>
        <taxon>Euarchontoglires</taxon>
        <taxon>Glires</taxon>
        <taxon>Rodentia</taxon>
        <taxon>Castorimorpha</taxon>
        <taxon>Heteromyidae</taxon>
        <taxon>Perognathinae</taxon>
        <taxon>Chaetodipus</taxon>
    </lineage>
</organism>
<geneLocation type="mitochondrion"/>
<dbReference type="EMBL" id="AY926397">
    <property type="protein sequence ID" value="AAY23240.1"/>
    <property type="molecule type" value="Genomic_DNA"/>
</dbReference>
<dbReference type="SMR" id="Q508K6"/>
<dbReference type="GO" id="GO:0005743">
    <property type="term" value="C:mitochondrial inner membrane"/>
    <property type="evidence" value="ECO:0007669"/>
    <property type="project" value="UniProtKB-SubCell"/>
</dbReference>
<dbReference type="GO" id="GO:0045275">
    <property type="term" value="C:respiratory chain complex III"/>
    <property type="evidence" value="ECO:0007669"/>
    <property type="project" value="InterPro"/>
</dbReference>
<dbReference type="GO" id="GO:0046872">
    <property type="term" value="F:metal ion binding"/>
    <property type="evidence" value="ECO:0007669"/>
    <property type="project" value="UniProtKB-KW"/>
</dbReference>
<dbReference type="GO" id="GO:0008121">
    <property type="term" value="F:ubiquinol-cytochrome-c reductase activity"/>
    <property type="evidence" value="ECO:0007669"/>
    <property type="project" value="InterPro"/>
</dbReference>
<dbReference type="GO" id="GO:0006122">
    <property type="term" value="P:mitochondrial electron transport, ubiquinol to cytochrome c"/>
    <property type="evidence" value="ECO:0007669"/>
    <property type="project" value="TreeGrafter"/>
</dbReference>
<dbReference type="CDD" id="cd00290">
    <property type="entry name" value="cytochrome_b_C"/>
    <property type="match status" value="1"/>
</dbReference>
<dbReference type="CDD" id="cd00284">
    <property type="entry name" value="Cytochrome_b_N"/>
    <property type="match status" value="1"/>
</dbReference>
<dbReference type="FunFam" id="1.20.810.10:FF:000002">
    <property type="entry name" value="Cytochrome b"/>
    <property type="match status" value="1"/>
</dbReference>
<dbReference type="Gene3D" id="1.20.810.10">
    <property type="entry name" value="Cytochrome Bc1 Complex, Chain C"/>
    <property type="match status" value="1"/>
</dbReference>
<dbReference type="InterPro" id="IPR005798">
    <property type="entry name" value="Cyt_b/b6_C"/>
</dbReference>
<dbReference type="InterPro" id="IPR036150">
    <property type="entry name" value="Cyt_b/b6_C_sf"/>
</dbReference>
<dbReference type="InterPro" id="IPR005797">
    <property type="entry name" value="Cyt_b/b6_N"/>
</dbReference>
<dbReference type="InterPro" id="IPR027387">
    <property type="entry name" value="Cytb/b6-like_sf"/>
</dbReference>
<dbReference type="InterPro" id="IPR030689">
    <property type="entry name" value="Cytochrome_b"/>
</dbReference>
<dbReference type="InterPro" id="IPR048260">
    <property type="entry name" value="Cytochrome_b_C_euk/bac"/>
</dbReference>
<dbReference type="InterPro" id="IPR048259">
    <property type="entry name" value="Cytochrome_b_N_euk/bac"/>
</dbReference>
<dbReference type="InterPro" id="IPR016174">
    <property type="entry name" value="Di-haem_cyt_TM"/>
</dbReference>
<dbReference type="PANTHER" id="PTHR19271">
    <property type="entry name" value="CYTOCHROME B"/>
    <property type="match status" value="1"/>
</dbReference>
<dbReference type="PANTHER" id="PTHR19271:SF16">
    <property type="entry name" value="CYTOCHROME B"/>
    <property type="match status" value="1"/>
</dbReference>
<dbReference type="Pfam" id="PF00032">
    <property type="entry name" value="Cytochrom_B_C"/>
    <property type="match status" value="1"/>
</dbReference>
<dbReference type="Pfam" id="PF00033">
    <property type="entry name" value="Cytochrome_B"/>
    <property type="match status" value="1"/>
</dbReference>
<dbReference type="PIRSF" id="PIRSF038885">
    <property type="entry name" value="COB"/>
    <property type="match status" value="1"/>
</dbReference>
<dbReference type="SUPFAM" id="SSF81648">
    <property type="entry name" value="a domain/subunit of cytochrome bc1 complex (Ubiquinol-cytochrome c reductase)"/>
    <property type="match status" value="1"/>
</dbReference>
<dbReference type="SUPFAM" id="SSF81342">
    <property type="entry name" value="Transmembrane di-heme cytochromes"/>
    <property type="match status" value="1"/>
</dbReference>
<dbReference type="PROSITE" id="PS51003">
    <property type="entry name" value="CYTB_CTER"/>
    <property type="match status" value="1"/>
</dbReference>
<dbReference type="PROSITE" id="PS51002">
    <property type="entry name" value="CYTB_NTER"/>
    <property type="match status" value="1"/>
</dbReference>
<protein>
    <recommendedName>
        <fullName>Cytochrome b</fullName>
    </recommendedName>
    <alternativeName>
        <fullName>Complex III subunit 3</fullName>
    </alternativeName>
    <alternativeName>
        <fullName>Complex III subunit III</fullName>
    </alternativeName>
    <alternativeName>
        <fullName>Cytochrome b-c1 complex subunit 3</fullName>
    </alternativeName>
    <alternativeName>
        <fullName>Ubiquinol-cytochrome-c reductase complex cytochrome b subunit</fullName>
    </alternativeName>
</protein>
<gene>
    <name type="primary">MT-CYB</name>
    <name type="synonym">COB</name>
    <name type="synonym">CYTB</name>
    <name type="synonym">MTCYB</name>
</gene>